<reference key="1">
    <citation type="journal article" date="2000" name="DNA Res.">
        <title>Complete genome structure of the nitrogen-fixing symbiotic bacterium Mesorhizobium loti.</title>
        <authorList>
            <person name="Kaneko T."/>
            <person name="Nakamura Y."/>
            <person name="Sato S."/>
            <person name="Asamizu E."/>
            <person name="Kato T."/>
            <person name="Sasamoto S."/>
            <person name="Watanabe A."/>
            <person name="Idesawa K."/>
            <person name="Ishikawa A."/>
            <person name="Kawashima K."/>
            <person name="Kimura T."/>
            <person name="Kishida Y."/>
            <person name="Kiyokawa C."/>
            <person name="Kohara M."/>
            <person name="Matsumoto M."/>
            <person name="Matsuno A."/>
            <person name="Mochizuki Y."/>
            <person name="Nakayama S."/>
            <person name="Nakazaki N."/>
            <person name="Shimpo S."/>
            <person name="Sugimoto M."/>
            <person name="Takeuchi C."/>
            <person name="Yamada M."/>
            <person name="Tabata S."/>
        </authorList>
    </citation>
    <scope>NUCLEOTIDE SEQUENCE [LARGE SCALE GENOMIC DNA]</scope>
    <source>
        <strain>LMG 29417 / CECT 9101 / MAFF 303099</strain>
    </source>
</reference>
<name>DGT1A_RHILO</name>
<organism>
    <name type="scientific">Mesorhizobium japonicum (strain LMG 29417 / CECT 9101 / MAFF 303099)</name>
    <name type="common">Mesorhizobium loti (strain MAFF 303099)</name>
    <dbReference type="NCBI Taxonomy" id="266835"/>
    <lineage>
        <taxon>Bacteria</taxon>
        <taxon>Pseudomonadati</taxon>
        <taxon>Pseudomonadota</taxon>
        <taxon>Alphaproteobacteria</taxon>
        <taxon>Hyphomicrobiales</taxon>
        <taxon>Phyllobacteriaceae</taxon>
        <taxon>Mesorhizobium</taxon>
    </lineage>
</organism>
<sequence length="404" mass="45369">MTNELGDIGFGYRPRAAYATDPALSRGRLFDEVESPTRTPFQRDRDRIIHSTAFRRLKHKTQVFIAHEGDHYRTRLTHSIEVAQIARAVARALRGDEDLAEAVALVHDFGHTPFGHTGEDALNDKMAAWGGFDHNAQSLRIVTRLEARYAEFDGLNLTWETLEGLVKHNGPLTDASGKGLKGPVPQAIRDYSQMQDLELDRFAGIEAQCAAIADDIAYNTHDIDDGLRAGLLTLDMLKTVSLPGKILEGVRQRYPRLDDVRTGHELMRRQITAMVEDVIVSATANLERVGPRSADAVRAAGETMVTFSAEMAAAEKELKAFLYKHLYRHEEVMRVRAGAEQIVRDLFDVYFADPRAMPDGWREGLDRAEDRIKARSVADFLAGMTDTYALKEHRRLFDRTPDLS</sequence>
<accession>Q98LB9</accession>
<dbReference type="EMBL" id="BA000012">
    <property type="protein sequence ID" value="BAB48544.1"/>
    <property type="molecule type" value="Genomic_DNA"/>
</dbReference>
<dbReference type="RefSeq" id="WP_010909898.1">
    <property type="nucleotide sequence ID" value="NC_002678.2"/>
</dbReference>
<dbReference type="SMR" id="Q98LB9"/>
<dbReference type="KEGG" id="mlo:mll1093"/>
<dbReference type="PATRIC" id="fig|266835.9.peg.882"/>
<dbReference type="eggNOG" id="COG0232">
    <property type="taxonomic scope" value="Bacteria"/>
</dbReference>
<dbReference type="HOGENOM" id="CLU_028163_1_0_5"/>
<dbReference type="Proteomes" id="UP000000552">
    <property type="component" value="Chromosome"/>
</dbReference>
<dbReference type="GO" id="GO:0008832">
    <property type="term" value="F:dGTPase activity"/>
    <property type="evidence" value="ECO:0007669"/>
    <property type="project" value="TreeGrafter"/>
</dbReference>
<dbReference type="GO" id="GO:0006203">
    <property type="term" value="P:dGTP catabolic process"/>
    <property type="evidence" value="ECO:0007669"/>
    <property type="project" value="TreeGrafter"/>
</dbReference>
<dbReference type="CDD" id="cd00077">
    <property type="entry name" value="HDc"/>
    <property type="match status" value="1"/>
</dbReference>
<dbReference type="Gene3D" id="1.10.3210.10">
    <property type="entry name" value="Hypothetical protein af1432"/>
    <property type="match status" value="1"/>
</dbReference>
<dbReference type="HAMAP" id="MF_01212">
    <property type="entry name" value="dGTPase_type2"/>
    <property type="match status" value="1"/>
</dbReference>
<dbReference type="InterPro" id="IPR006261">
    <property type="entry name" value="dGTPase"/>
</dbReference>
<dbReference type="InterPro" id="IPR050135">
    <property type="entry name" value="dGTPase-like"/>
</dbReference>
<dbReference type="InterPro" id="IPR023023">
    <property type="entry name" value="dNTPase_2"/>
</dbReference>
<dbReference type="InterPro" id="IPR003607">
    <property type="entry name" value="HD/PDEase_dom"/>
</dbReference>
<dbReference type="InterPro" id="IPR006674">
    <property type="entry name" value="HD_domain"/>
</dbReference>
<dbReference type="InterPro" id="IPR026875">
    <property type="entry name" value="PHydrolase_assoc_dom"/>
</dbReference>
<dbReference type="NCBIfam" id="TIGR01353">
    <property type="entry name" value="dGTP_triPase"/>
    <property type="match status" value="1"/>
</dbReference>
<dbReference type="NCBIfam" id="NF002326">
    <property type="entry name" value="PRK01286.1-1"/>
    <property type="match status" value="1"/>
</dbReference>
<dbReference type="NCBIfam" id="NF002328">
    <property type="entry name" value="PRK01286.1-3"/>
    <property type="match status" value="1"/>
</dbReference>
<dbReference type="PANTHER" id="PTHR11373:SF43">
    <property type="entry name" value="DEOXYGUANOSINETRIPHOSPHATE TRIPHOSPHOHYDROLASE-LIKE PROTEIN"/>
    <property type="match status" value="1"/>
</dbReference>
<dbReference type="PANTHER" id="PTHR11373">
    <property type="entry name" value="DEOXYNUCLEOSIDE TRIPHOSPHATE TRIPHOSPHOHYDROLASE"/>
    <property type="match status" value="1"/>
</dbReference>
<dbReference type="Pfam" id="PF01966">
    <property type="entry name" value="HD"/>
    <property type="match status" value="1"/>
</dbReference>
<dbReference type="Pfam" id="PF13286">
    <property type="entry name" value="HD_assoc"/>
    <property type="match status" value="1"/>
</dbReference>
<dbReference type="SMART" id="SM00471">
    <property type="entry name" value="HDc"/>
    <property type="match status" value="1"/>
</dbReference>
<dbReference type="SUPFAM" id="SSF109604">
    <property type="entry name" value="HD-domain/PDEase-like"/>
    <property type="match status" value="1"/>
</dbReference>
<dbReference type="PROSITE" id="PS51831">
    <property type="entry name" value="HD"/>
    <property type="match status" value="1"/>
</dbReference>
<comment type="similarity">
    <text evidence="1">Belongs to the dGTPase family. Type 2 subfamily.</text>
</comment>
<keyword id="KW-0378">Hydrolase</keyword>
<protein>
    <recommendedName>
        <fullName evidence="1">Deoxyguanosinetriphosphate triphosphohydrolase-like protein 1</fullName>
    </recommendedName>
</protein>
<proteinExistence type="inferred from homology"/>
<evidence type="ECO:0000255" key="1">
    <source>
        <dbReference type="HAMAP-Rule" id="MF_01212"/>
    </source>
</evidence>
<evidence type="ECO:0000255" key="2">
    <source>
        <dbReference type="PROSITE-ProRule" id="PRU01175"/>
    </source>
</evidence>
<gene>
    <name type="ordered locus">mll1093</name>
</gene>
<feature type="chain" id="PRO_0000205314" description="Deoxyguanosinetriphosphate triphosphohydrolase-like protein 1">
    <location>
        <begin position="1"/>
        <end position="404"/>
    </location>
</feature>
<feature type="domain" description="HD" evidence="2">
    <location>
        <begin position="75"/>
        <end position="219"/>
    </location>
</feature>